<reference key="1">
    <citation type="journal article" date="1996" name="Science">
        <title>Complete genome sequence of the methanogenic archaeon, Methanococcus jannaschii.</title>
        <authorList>
            <person name="Bult C.J."/>
            <person name="White O."/>
            <person name="Olsen G.J."/>
            <person name="Zhou L."/>
            <person name="Fleischmann R.D."/>
            <person name="Sutton G.G."/>
            <person name="Blake J.A."/>
            <person name="FitzGerald L.M."/>
            <person name="Clayton R.A."/>
            <person name="Gocayne J.D."/>
            <person name="Kerlavage A.R."/>
            <person name="Dougherty B.A."/>
            <person name="Tomb J.-F."/>
            <person name="Adams M.D."/>
            <person name="Reich C.I."/>
            <person name="Overbeek R."/>
            <person name="Kirkness E.F."/>
            <person name="Weinstock K.G."/>
            <person name="Merrick J.M."/>
            <person name="Glodek A."/>
            <person name="Scott J.L."/>
            <person name="Geoghagen N.S.M."/>
            <person name="Weidman J.F."/>
            <person name="Fuhrmann J.L."/>
            <person name="Nguyen D."/>
            <person name="Utterback T.R."/>
            <person name="Kelley J.M."/>
            <person name="Peterson J.D."/>
            <person name="Sadow P.W."/>
            <person name="Hanna M.C."/>
            <person name="Cotton M.D."/>
            <person name="Roberts K.M."/>
            <person name="Hurst M.A."/>
            <person name="Kaine B.P."/>
            <person name="Borodovsky M."/>
            <person name="Klenk H.-P."/>
            <person name="Fraser C.M."/>
            <person name="Smith H.O."/>
            <person name="Woese C.R."/>
            <person name="Venter J.C."/>
        </authorList>
    </citation>
    <scope>NUCLEOTIDE SEQUENCE [LARGE SCALE GENOMIC DNA]</scope>
    <source>
        <strain>ATCC 43067 / DSM 2661 / JAL-1 / JCM 10045 / NBRC 100440</strain>
    </source>
</reference>
<dbReference type="EMBL" id="L77117">
    <property type="protein sequence ID" value="AAB98447.1"/>
    <property type="molecule type" value="Genomic_DNA"/>
</dbReference>
<dbReference type="PIR" id="G64355">
    <property type="entry name" value="G64355"/>
</dbReference>
<dbReference type="RefSeq" id="WP_010869946.1">
    <property type="nucleotide sequence ID" value="NC_000909.1"/>
</dbReference>
<dbReference type="SMR" id="Q57889"/>
<dbReference type="STRING" id="243232.MJ_0447"/>
<dbReference type="PaxDb" id="243232-MJ_0447"/>
<dbReference type="EnsemblBacteria" id="AAB98447">
    <property type="protein sequence ID" value="AAB98447"/>
    <property type="gene ID" value="MJ_0447"/>
</dbReference>
<dbReference type="GeneID" id="1451307"/>
<dbReference type="KEGG" id="mja:MJ_0447"/>
<dbReference type="eggNOG" id="arCOG09632">
    <property type="taxonomic scope" value="Archaea"/>
</dbReference>
<dbReference type="HOGENOM" id="CLU_1656864_0_0_2"/>
<dbReference type="InParanoid" id="Q57889"/>
<dbReference type="OrthoDB" id="63897at2157"/>
<dbReference type="Proteomes" id="UP000000805">
    <property type="component" value="Chromosome"/>
</dbReference>
<name>Y447_METJA</name>
<gene>
    <name type="ordered locus">MJ0447</name>
</gene>
<protein>
    <recommendedName>
        <fullName>Uncharacterized protein MJ0447</fullName>
    </recommendedName>
</protein>
<accession>Q57889</accession>
<feature type="chain" id="PRO_0000106879" description="Uncharacterized protein MJ0447">
    <location>
        <begin position="1"/>
        <end position="161"/>
    </location>
</feature>
<keyword id="KW-1185">Reference proteome</keyword>
<organism>
    <name type="scientific">Methanocaldococcus jannaschii (strain ATCC 43067 / DSM 2661 / JAL-1 / JCM 10045 / NBRC 100440)</name>
    <name type="common">Methanococcus jannaschii</name>
    <dbReference type="NCBI Taxonomy" id="243232"/>
    <lineage>
        <taxon>Archaea</taxon>
        <taxon>Methanobacteriati</taxon>
        <taxon>Methanobacteriota</taxon>
        <taxon>Methanomada group</taxon>
        <taxon>Methanococci</taxon>
        <taxon>Methanococcales</taxon>
        <taxon>Methanocaldococcaceae</taxon>
        <taxon>Methanocaldococcus</taxon>
    </lineage>
</organism>
<sequence length="161" mass="19125">MNLNIKEIKQKINEWKNREWRWKGKGKIEIRFVCLIERAESFKELVDNLEIIICEYEKIKQLIEDKDIKEIAKLNLFCGNNVYEEMLKDILSSNKFISLTISFDENIAYVKYMERGKEEVVYLDGKSAYKALQILKNRYENILKKQISIIEDAIPLTIPSQ</sequence>
<proteinExistence type="predicted"/>